<reference key="1">
    <citation type="journal article" date="1995" name="Science">
        <title>Whole-genome random sequencing and assembly of Haemophilus influenzae Rd.</title>
        <authorList>
            <person name="Fleischmann R.D."/>
            <person name="Adams M.D."/>
            <person name="White O."/>
            <person name="Clayton R.A."/>
            <person name="Kirkness E.F."/>
            <person name="Kerlavage A.R."/>
            <person name="Bult C.J."/>
            <person name="Tomb J.-F."/>
            <person name="Dougherty B.A."/>
            <person name="Merrick J.M."/>
            <person name="McKenney K."/>
            <person name="Sutton G.G."/>
            <person name="FitzHugh W."/>
            <person name="Fields C.A."/>
            <person name="Gocayne J.D."/>
            <person name="Scott J.D."/>
            <person name="Shirley R."/>
            <person name="Liu L.-I."/>
            <person name="Glodek A."/>
            <person name="Kelley J.M."/>
            <person name="Weidman J.F."/>
            <person name="Phillips C.A."/>
            <person name="Spriggs T."/>
            <person name="Hedblom E."/>
            <person name="Cotton M.D."/>
            <person name="Utterback T.R."/>
            <person name="Hanna M.C."/>
            <person name="Nguyen D.T."/>
            <person name="Saudek D.M."/>
            <person name="Brandon R.C."/>
            <person name="Fine L.D."/>
            <person name="Fritchman J.L."/>
            <person name="Fuhrmann J.L."/>
            <person name="Geoghagen N.S.M."/>
            <person name="Gnehm C.L."/>
            <person name="McDonald L.A."/>
            <person name="Small K.V."/>
            <person name="Fraser C.M."/>
            <person name="Smith H.O."/>
            <person name="Venter J.C."/>
        </authorList>
    </citation>
    <scope>NUCLEOTIDE SEQUENCE [LARGE SCALE GENOMIC DNA]</scope>
    <source>
        <strain>ATCC 51907 / DSM 11121 / KW20 / Rd</strain>
    </source>
</reference>
<proteinExistence type="inferred from homology"/>
<name>SYA_HAEIN</name>
<organism>
    <name type="scientific">Haemophilus influenzae (strain ATCC 51907 / DSM 11121 / KW20 / Rd)</name>
    <dbReference type="NCBI Taxonomy" id="71421"/>
    <lineage>
        <taxon>Bacteria</taxon>
        <taxon>Pseudomonadati</taxon>
        <taxon>Pseudomonadota</taxon>
        <taxon>Gammaproteobacteria</taxon>
        <taxon>Pasteurellales</taxon>
        <taxon>Pasteurellaceae</taxon>
        <taxon>Haemophilus</taxon>
    </lineage>
</organism>
<dbReference type="EC" id="6.1.1.7" evidence="1"/>
<dbReference type="EMBL" id="L42023">
    <property type="protein sequence ID" value="AAC22473.1"/>
    <property type="molecule type" value="Genomic_DNA"/>
</dbReference>
<dbReference type="PIR" id="I64095">
    <property type="entry name" value="I64095"/>
</dbReference>
<dbReference type="RefSeq" id="NP_438974.1">
    <property type="nucleotide sequence ID" value="NC_000907.1"/>
</dbReference>
<dbReference type="SMR" id="P43815"/>
<dbReference type="STRING" id="71421.HI_0814"/>
<dbReference type="EnsemblBacteria" id="AAC22473">
    <property type="protein sequence ID" value="AAC22473"/>
    <property type="gene ID" value="HI_0814"/>
</dbReference>
<dbReference type="KEGG" id="hin:HI_0814"/>
<dbReference type="PATRIC" id="fig|71421.8.peg.855"/>
<dbReference type="eggNOG" id="COG0013">
    <property type="taxonomic scope" value="Bacteria"/>
</dbReference>
<dbReference type="HOGENOM" id="CLU_004485_1_1_6"/>
<dbReference type="OrthoDB" id="9803884at2"/>
<dbReference type="PhylomeDB" id="P43815"/>
<dbReference type="BioCyc" id="HINF71421:G1GJ1-855-MONOMER"/>
<dbReference type="Proteomes" id="UP000000579">
    <property type="component" value="Chromosome"/>
</dbReference>
<dbReference type="GO" id="GO:0005829">
    <property type="term" value="C:cytosol"/>
    <property type="evidence" value="ECO:0000318"/>
    <property type="project" value="GO_Central"/>
</dbReference>
<dbReference type="GO" id="GO:0004813">
    <property type="term" value="F:alanine-tRNA ligase activity"/>
    <property type="evidence" value="ECO:0000318"/>
    <property type="project" value="GO_Central"/>
</dbReference>
<dbReference type="GO" id="GO:0002161">
    <property type="term" value="F:aminoacyl-tRNA deacylase activity"/>
    <property type="evidence" value="ECO:0000318"/>
    <property type="project" value="GO_Central"/>
</dbReference>
<dbReference type="GO" id="GO:0005524">
    <property type="term" value="F:ATP binding"/>
    <property type="evidence" value="ECO:0007669"/>
    <property type="project" value="UniProtKB-UniRule"/>
</dbReference>
<dbReference type="GO" id="GO:0000049">
    <property type="term" value="F:tRNA binding"/>
    <property type="evidence" value="ECO:0007669"/>
    <property type="project" value="UniProtKB-KW"/>
</dbReference>
<dbReference type="GO" id="GO:0008270">
    <property type="term" value="F:zinc ion binding"/>
    <property type="evidence" value="ECO:0007669"/>
    <property type="project" value="UniProtKB-UniRule"/>
</dbReference>
<dbReference type="GO" id="GO:0006419">
    <property type="term" value="P:alanyl-tRNA aminoacylation"/>
    <property type="evidence" value="ECO:0000318"/>
    <property type="project" value="GO_Central"/>
</dbReference>
<dbReference type="GO" id="GO:0045892">
    <property type="term" value="P:negative regulation of DNA-templated transcription"/>
    <property type="evidence" value="ECO:0000318"/>
    <property type="project" value="GO_Central"/>
</dbReference>
<dbReference type="CDD" id="cd00673">
    <property type="entry name" value="AlaRS_core"/>
    <property type="match status" value="1"/>
</dbReference>
<dbReference type="FunFam" id="2.40.30.130:FF:000001">
    <property type="entry name" value="Alanine--tRNA ligase"/>
    <property type="match status" value="1"/>
</dbReference>
<dbReference type="FunFam" id="3.10.310.40:FF:000001">
    <property type="entry name" value="Alanine--tRNA ligase"/>
    <property type="match status" value="1"/>
</dbReference>
<dbReference type="FunFam" id="3.30.54.20:FF:000001">
    <property type="entry name" value="Alanine--tRNA ligase"/>
    <property type="match status" value="1"/>
</dbReference>
<dbReference type="FunFam" id="3.30.930.10:FF:000004">
    <property type="entry name" value="Alanine--tRNA ligase"/>
    <property type="match status" value="1"/>
</dbReference>
<dbReference type="FunFam" id="3.30.980.10:FF:000004">
    <property type="entry name" value="Alanine--tRNA ligase, cytoplasmic"/>
    <property type="match status" value="1"/>
</dbReference>
<dbReference type="Gene3D" id="2.40.30.130">
    <property type="match status" value="1"/>
</dbReference>
<dbReference type="Gene3D" id="3.10.310.40">
    <property type="match status" value="1"/>
</dbReference>
<dbReference type="Gene3D" id="3.30.54.20">
    <property type="match status" value="1"/>
</dbReference>
<dbReference type="Gene3D" id="6.10.250.550">
    <property type="match status" value="1"/>
</dbReference>
<dbReference type="Gene3D" id="3.30.930.10">
    <property type="entry name" value="Bira Bifunctional Protein, Domain 2"/>
    <property type="match status" value="1"/>
</dbReference>
<dbReference type="Gene3D" id="3.30.980.10">
    <property type="entry name" value="Threonyl-trna Synthetase, Chain A, domain 2"/>
    <property type="match status" value="1"/>
</dbReference>
<dbReference type="HAMAP" id="MF_00036_B">
    <property type="entry name" value="Ala_tRNA_synth_B"/>
    <property type="match status" value="1"/>
</dbReference>
<dbReference type="InterPro" id="IPR045864">
    <property type="entry name" value="aa-tRNA-synth_II/BPL/LPL"/>
</dbReference>
<dbReference type="InterPro" id="IPR002318">
    <property type="entry name" value="Ala-tRNA-lgiase_IIc"/>
</dbReference>
<dbReference type="InterPro" id="IPR018162">
    <property type="entry name" value="Ala-tRNA-ligase_IIc_anticod-bd"/>
</dbReference>
<dbReference type="InterPro" id="IPR018165">
    <property type="entry name" value="Ala-tRNA-synth_IIc_core"/>
</dbReference>
<dbReference type="InterPro" id="IPR018164">
    <property type="entry name" value="Ala-tRNA-synth_IIc_N"/>
</dbReference>
<dbReference type="InterPro" id="IPR050058">
    <property type="entry name" value="Ala-tRNA_ligase"/>
</dbReference>
<dbReference type="InterPro" id="IPR023033">
    <property type="entry name" value="Ala_tRNA_ligase_euk/bac"/>
</dbReference>
<dbReference type="InterPro" id="IPR003156">
    <property type="entry name" value="DHHA1_dom"/>
</dbReference>
<dbReference type="InterPro" id="IPR018163">
    <property type="entry name" value="Thr/Ala-tRNA-synth_IIc_edit"/>
</dbReference>
<dbReference type="InterPro" id="IPR009000">
    <property type="entry name" value="Transl_B-barrel_sf"/>
</dbReference>
<dbReference type="InterPro" id="IPR012947">
    <property type="entry name" value="tRNA_SAD"/>
</dbReference>
<dbReference type="NCBIfam" id="TIGR00344">
    <property type="entry name" value="alaS"/>
    <property type="match status" value="1"/>
</dbReference>
<dbReference type="PANTHER" id="PTHR11777:SF9">
    <property type="entry name" value="ALANINE--TRNA LIGASE, CYTOPLASMIC"/>
    <property type="match status" value="1"/>
</dbReference>
<dbReference type="PANTHER" id="PTHR11777">
    <property type="entry name" value="ALANYL-TRNA SYNTHETASE"/>
    <property type="match status" value="1"/>
</dbReference>
<dbReference type="Pfam" id="PF02272">
    <property type="entry name" value="DHHA1"/>
    <property type="match status" value="1"/>
</dbReference>
<dbReference type="Pfam" id="PF01411">
    <property type="entry name" value="tRNA-synt_2c"/>
    <property type="match status" value="1"/>
</dbReference>
<dbReference type="Pfam" id="PF07973">
    <property type="entry name" value="tRNA_SAD"/>
    <property type="match status" value="1"/>
</dbReference>
<dbReference type="PRINTS" id="PR00980">
    <property type="entry name" value="TRNASYNTHALA"/>
</dbReference>
<dbReference type="SMART" id="SM00863">
    <property type="entry name" value="tRNA_SAD"/>
    <property type="match status" value="1"/>
</dbReference>
<dbReference type="SUPFAM" id="SSF55681">
    <property type="entry name" value="Class II aaRS and biotin synthetases"/>
    <property type="match status" value="1"/>
</dbReference>
<dbReference type="SUPFAM" id="SSF101353">
    <property type="entry name" value="Putative anticodon-binding domain of alanyl-tRNA synthetase (AlaRS)"/>
    <property type="match status" value="1"/>
</dbReference>
<dbReference type="SUPFAM" id="SSF55186">
    <property type="entry name" value="ThrRS/AlaRS common domain"/>
    <property type="match status" value="1"/>
</dbReference>
<dbReference type="SUPFAM" id="SSF50447">
    <property type="entry name" value="Translation proteins"/>
    <property type="match status" value="1"/>
</dbReference>
<dbReference type="PROSITE" id="PS50860">
    <property type="entry name" value="AA_TRNA_LIGASE_II_ALA"/>
    <property type="match status" value="1"/>
</dbReference>
<sequence length="874" mass="96601">MKTTAEIRQSFLDFFHSKGHQVVESSSLVPENDPTLLFTNAGMNQFKDVFLGMDKRPYSRATTAQRCVRPGGKHNDLENVGYTARHHTFFEMLGNFSFGDYFKQDAINFAWEYLTSPQWLGLPKEKLWVTVYETDDEAYNIWNKDVGVPAERIIRIGDNKGSPYASDNFWAMGDTGPCGPCTEIFYDHGDHIWGGPPGSPEEDGDRYIEIWNVVFMQFNRLADGTMEKLPRPSVDTGMGLERISAVLQHVNSNYEIDIFKTLIAKTAEIVGATDLTNKSLRVIADHIRSCAYLIADGVIPSNEGRGYVLRRIIRRAVRHGHLLGAKESFFYKLVPTLIDVMAEAGKDVKAKQTNVEKLLRLEEEQFARTLERGLSLLDEALSQVKDGILSGEVAFKLYDTYGFPLDLTADVCRERNITIDEQAFDRKMEAQRTRAQAASQFGVDYNSVIRVDGETKFEGYTEVESQAKITALFYDGKSVESIEAGQSAVVILENTPFYAESGGQIGDSGYLSTQSVTFNVKDTQKYGQVFGHIGELTQGSLKVGQSVNAIVDAKRRHNTSLNHSATHLLHAALRQILGLHVVQKGSLVSDKALRFDFAQPEAITKEQLSEIETLVNQKIRANFPVQTDIMDIDSAKAKGAMALFGEKYGDKVRVLTMGDFSIELCGGIHAKRTGDIGLFKIITENAVAAGIRRIEAVTGQNAIDWLHNQQRILTQSADLLKSDVNTLAEKIQQLQDKAKKVEKELQGLKEKAAMQAGSYFVKSAVKINGVSVIAQQLDGIETKSLRVMVDDLKNQLGSGVIAFASILDEKVNLVVGVTNDLTAKIKAGELVNLMAQQVGGKGGGRPDMAMAGGSQLENVTQAIKVAQDWLNKNL</sequence>
<evidence type="ECO:0000255" key="1">
    <source>
        <dbReference type="HAMAP-Rule" id="MF_00036"/>
    </source>
</evidence>
<feature type="chain" id="PRO_0000075122" description="Alanine--tRNA ligase">
    <location>
        <begin position="1"/>
        <end position="874"/>
    </location>
</feature>
<feature type="binding site" evidence="1">
    <location>
        <position position="563"/>
    </location>
    <ligand>
        <name>Zn(2+)</name>
        <dbReference type="ChEBI" id="CHEBI:29105"/>
    </ligand>
</feature>
<feature type="binding site" evidence="1">
    <location>
        <position position="567"/>
    </location>
    <ligand>
        <name>Zn(2+)</name>
        <dbReference type="ChEBI" id="CHEBI:29105"/>
    </ligand>
</feature>
<feature type="binding site" evidence="1">
    <location>
        <position position="665"/>
    </location>
    <ligand>
        <name>Zn(2+)</name>
        <dbReference type="ChEBI" id="CHEBI:29105"/>
    </ligand>
</feature>
<feature type="binding site" evidence="1">
    <location>
        <position position="669"/>
    </location>
    <ligand>
        <name>Zn(2+)</name>
        <dbReference type="ChEBI" id="CHEBI:29105"/>
    </ligand>
</feature>
<gene>
    <name evidence="1" type="primary">alaS</name>
    <name type="ordered locus">HI_0814</name>
</gene>
<protein>
    <recommendedName>
        <fullName evidence="1">Alanine--tRNA ligase</fullName>
        <ecNumber evidence="1">6.1.1.7</ecNumber>
    </recommendedName>
    <alternativeName>
        <fullName evidence="1">Alanyl-tRNA synthetase</fullName>
        <shortName evidence="1">AlaRS</shortName>
    </alternativeName>
</protein>
<comment type="function">
    <text evidence="1">Catalyzes the attachment of alanine to tRNA(Ala) in a two-step reaction: alanine is first activated by ATP to form Ala-AMP and then transferred to the acceptor end of tRNA(Ala). Also edits incorrectly charged Ser-tRNA(Ala) and Gly-tRNA(Ala) via its editing domain.</text>
</comment>
<comment type="catalytic activity">
    <reaction evidence="1">
        <text>tRNA(Ala) + L-alanine + ATP = L-alanyl-tRNA(Ala) + AMP + diphosphate</text>
        <dbReference type="Rhea" id="RHEA:12540"/>
        <dbReference type="Rhea" id="RHEA-COMP:9657"/>
        <dbReference type="Rhea" id="RHEA-COMP:9923"/>
        <dbReference type="ChEBI" id="CHEBI:30616"/>
        <dbReference type="ChEBI" id="CHEBI:33019"/>
        <dbReference type="ChEBI" id="CHEBI:57972"/>
        <dbReference type="ChEBI" id="CHEBI:78442"/>
        <dbReference type="ChEBI" id="CHEBI:78497"/>
        <dbReference type="ChEBI" id="CHEBI:456215"/>
        <dbReference type="EC" id="6.1.1.7"/>
    </reaction>
</comment>
<comment type="cofactor">
    <cofactor evidence="1">
        <name>Zn(2+)</name>
        <dbReference type="ChEBI" id="CHEBI:29105"/>
    </cofactor>
    <text evidence="1">Binds 1 zinc ion per subunit.</text>
</comment>
<comment type="subcellular location">
    <subcellularLocation>
        <location evidence="1">Cytoplasm</location>
    </subcellularLocation>
</comment>
<comment type="domain">
    <text evidence="1">Consists of three domains; the N-terminal catalytic domain, the editing domain and the C-terminal C-Ala domain. The editing domain removes incorrectly charged amino acids, while the C-Ala domain, along with tRNA(Ala), serves as a bridge to cooperatively bring together the editing and aminoacylation centers thus stimulating deacylation of misacylated tRNAs.</text>
</comment>
<comment type="similarity">
    <text evidence="1">Belongs to the class-II aminoacyl-tRNA synthetase family.</text>
</comment>
<accession>P43815</accession>
<keyword id="KW-0030">Aminoacyl-tRNA synthetase</keyword>
<keyword id="KW-0067">ATP-binding</keyword>
<keyword id="KW-0963">Cytoplasm</keyword>
<keyword id="KW-0436">Ligase</keyword>
<keyword id="KW-0479">Metal-binding</keyword>
<keyword id="KW-0547">Nucleotide-binding</keyword>
<keyword id="KW-0648">Protein biosynthesis</keyword>
<keyword id="KW-1185">Reference proteome</keyword>
<keyword id="KW-0694">RNA-binding</keyword>
<keyword id="KW-0820">tRNA-binding</keyword>
<keyword id="KW-0862">Zinc</keyword>